<dbReference type="EMBL" id="AE005673">
    <property type="protein sequence ID" value="AAK23230.1"/>
    <property type="molecule type" value="Genomic_DNA"/>
</dbReference>
<dbReference type="PIR" id="B87404">
    <property type="entry name" value="B87404"/>
</dbReference>
<dbReference type="RefSeq" id="NP_420062.1">
    <property type="nucleotide sequence ID" value="NC_002696.2"/>
</dbReference>
<dbReference type="RefSeq" id="WP_010919128.1">
    <property type="nucleotide sequence ID" value="NC_002696.2"/>
</dbReference>
<dbReference type="SMR" id="Q9A8V2"/>
<dbReference type="STRING" id="190650.CC_1249"/>
<dbReference type="EnsemblBacteria" id="AAK23230">
    <property type="protein sequence ID" value="AAK23230"/>
    <property type="gene ID" value="CC_1249"/>
</dbReference>
<dbReference type="KEGG" id="ccr:CC_1249"/>
<dbReference type="PATRIC" id="fig|190650.5.peg.1274"/>
<dbReference type="eggNOG" id="COG0088">
    <property type="taxonomic scope" value="Bacteria"/>
</dbReference>
<dbReference type="HOGENOM" id="CLU_041575_5_1_5"/>
<dbReference type="BioCyc" id="CAULO:CC1249-MONOMER"/>
<dbReference type="Proteomes" id="UP000001816">
    <property type="component" value="Chromosome"/>
</dbReference>
<dbReference type="GO" id="GO:1990904">
    <property type="term" value="C:ribonucleoprotein complex"/>
    <property type="evidence" value="ECO:0007669"/>
    <property type="project" value="UniProtKB-KW"/>
</dbReference>
<dbReference type="GO" id="GO:0005840">
    <property type="term" value="C:ribosome"/>
    <property type="evidence" value="ECO:0007669"/>
    <property type="project" value="UniProtKB-KW"/>
</dbReference>
<dbReference type="GO" id="GO:0019843">
    <property type="term" value="F:rRNA binding"/>
    <property type="evidence" value="ECO:0007669"/>
    <property type="project" value="UniProtKB-UniRule"/>
</dbReference>
<dbReference type="GO" id="GO:0003735">
    <property type="term" value="F:structural constituent of ribosome"/>
    <property type="evidence" value="ECO:0007669"/>
    <property type="project" value="InterPro"/>
</dbReference>
<dbReference type="GO" id="GO:0006412">
    <property type="term" value="P:translation"/>
    <property type="evidence" value="ECO:0007669"/>
    <property type="project" value="UniProtKB-UniRule"/>
</dbReference>
<dbReference type="Gene3D" id="3.40.1370.10">
    <property type="match status" value="1"/>
</dbReference>
<dbReference type="HAMAP" id="MF_01328_B">
    <property type="entry name" value="Ribosomal_uL4_B"/>
    <property type="match status" value="1"/>
</dbReference>
<dbReference type="InterPro" id="IPR002136">
    <property type="entry name" value="Ribosomal_uL4"/>
</dbReference>
<dbReference type="InterPro" id="IPR013005">
    <property type="entry name" value="Ribosomal_uL4-like"/>
</dbReference>
<dbReference type="InterPro" id="IPR023574">
    <property type="entry name" value="Ribosomal_uL4_dom_sf"/>
</dbReference>
<dbReference type="NCBIfam" id="TIGR03953">
    <property type="entry name" value="rplD_bact"/>
    <property type="match status" value="1"/>
</dbReference>
<dbReference type="PANTHER" id="PTHR10746">
    <property type="entry name" value="50S RIBOSOMAL PROTEIN L4"/>
    <property type="match status" value="1"/>
</dbReference>
<dbReference type="PANTHER" id="PTHR10746:SF6">
    <property type="entry name" value="LARGE RIBOSOMAL SUBUNIT PROTEIN UL4M"/>
    <property type="match status" value="1"/>
</dbReference>
<dbReference type="Pfam" id="PF00573">
    <property type="entry name" value="Ribosomal_L4"/>
    <property type="match status" value="1"/>
</dbReference>
<dbReference type="SUPFAM" id="SSF52166">
    <property type="entry name" value="Ribosomal protein L4"/>
    <property type="match status" value="1"/>
</dbReference>
<sequence>MKLDVIKLDGGKAGSVDLDDAIFGIDEIRGDILQRVVTWQLAKRRSGNHKIQVRNEVSRTSKKMYKQKGTGGARHGSRRAAQFVGGAKAHGPVVRSHAFDLPKKIRALALRHALSSKAKAGSLVVVDSVALTEAKTAALRATFDKIGLKNALVIAGPEVDANFKLAARNIPNVDVLPNAGLNVYDVLRRQTLVLTKDAVEAISARFAEKEAA</sequence>
<feature type="chain" id="PRO_0000129200" description="Large ribosomal subunit protein uL4">
    <location>
        <begin position="1"/>
        <end position="212"/>
    </location>
</feature>
<keyword id="KW-1185">Reference proteome</keyword>
<keyword id="KW-0687">Ribonucleoprotein</keyword>
<keyword id="KW-0689">Ribosomal protein</keyword>
<keyword id="KW-0694">RNA-binding</keyword>
<keyword id="KW-0699">rRNA-binding</keyword>
<reference key="1">
    <citation type="journal article" date="2001" name="Proc. Natl. Acad. Sci. U.S.A.">
        <title>Complete genome sequence of Caulobacter crescentus.</title>
        <authorList>
            <person name="Nierman W.C."/>
            <person name="Feldblyum T.V."/>
            <person name="Laub M.T."/>
            <person name="Paulsen I.T."/>
            <person name="Nelson K.E."/>
            <person name="Eisen J.A."/>
            <person name="Heidelberg J.F."/>
            <person name="Alley M.R.K."/>
            <person name="Ohta N."/>
            <person name="Maddock J.R."/>
            <person name="Potocka I."/>
            <person name="Nelson W.C."/>
            <person name="Newton A."/>
            <person name="Stephens C."/>
            <person name="Phadke N.D."/>
            <person name="Ely B."/>
            <person name="DeBoy R.T."/>
            <person name="Dodson R.J."/>
            <person name="Durkin A.S."/>
            <person name="Gwinn M.L."/>
            <person name="Haft D.H."/>
            <person name="Kolonay J.F."/>
            <person name="Smit J."/>
            <person name="Craven M.B."/>
            <person name="Khouri H.M."/>
            <person name="Shetty J."/>
            <person name="Berry K.J."/>
            <person name="Utterback T.R."/>
            <person name="Tran K."/>
            <person name="Wolf A.M."/>
            <person name="Vamathevan J.J."/>
            <person name="Ermolaeva M.D."/>
            <person name="White O."/>
            <person name="Salzberg S.L."/>
            <person name="Venter J.C."/>
            <person name="Shapiro L."/>
            <person name="Fraser C.M."/>
        </authorList>
    </citation>
    <scope>NUCLEOTIDE SEQUENCE [LARGE SCALE GENOMIC DNA]</scope>
    <source>
        <strain>ATCC 19089 / CIP 103742 / CB 15</strain>
    </source>
</reference>
<accession>Q9A8V2</accession>
<proteinExistence type="inferred from homology"/>
<protein>
    <recommendedName>
        <fullName evidence="1">Large ribosomal subunit protein uL4</fullName>
    </recommendedName>
    <alternativeName>
        <fullName evidence="2">50S ribosomal protein L4</fullName>
    </alternativeName>
</protein>
<name>RL4_CAUVC</name>
<organism>
    <name type="scientific">Caulobacter vibrioides (strain ATCC 19089 / CIP 103742 / CB 15)</name>
    <name type="common">Caulobacter crescentus</name>
    <dbReference type="NCBI Taxonomy" id="190650"/>
    <lineage>
        <taxon>Bacteria</taxon>
        <taxon>Pseudomonadati</taxon>
        <taxon>Pseudomonadota</taxon>
        <taxon>Alphaproteobacteria</taxon>
        <taxon>Caulobacterales</taxon>
        <taxon>Caulobacteraceae</taxon>
        <taxon>Caulobacter</taxon>
    </lineage>
</organism>
<comment type="function">
    <text evidence="1">One of the primary rRNA binding proteins, this protein initially binds near the 5'-end of the 23S rRNA. It is important during the early stages of 50S assembly. It makes multiple contacts with different domains of the 23S rRNA in the assembled 50S subunit and ribosome.</text>
</comment>
<comment type="function">
    <text evidence="1">Forms part of the polypeptide exit tunnel.</text>
</comment>
<comment type="subunit">
    <text evidence="1">Part of the 50S ribosomal subunit.</text>
</comment>
<comment type="similarity">
    <text evidence="1">Belongs to the universal ribosomal protein uL4 family.</text>
</comment>
<evidence type="ECO:0000255" key="1">
    <source>
        <dbReference type="HAMAP-Rule" id="MF_01328"/>
    </source>
</evidence>
<evidence type="ECO:0000305" key="2"/>
<gene>
    <name evidence="1" type="primary">rplD</name>
    <name type="ordered locus">CC_1249</name>
</gene>